<comment type="function">
    <text evidence="1">Plays a role in controlling food intake and regulating body size.</text>
</comment>
<comment type="subcellular location">
    <subcellularLocation>
        <location evidence="6">Secreted</location>
    </subcellularLocation>
</comment>
<comment type="tissue specificity">
    <text evidence="3">Expressed throughout the central nervous system (at protein level).</text>
</comment>
<comment type="mass spectrometry"/>
<comment type="similarity">
    <text evidence="5">Belongs to the NPY family.</text>
</comment>
<feature type="signal peptide" evidence="2">
    <location>
        <begin position="1"/>
        <end position="24"/>
    </location>
</feature>
<feature type="propeptide" id="PRO_0000434257" evidence="6">
    <location>
        <begin position="25"/>
        <end position="76"/>
    </location>
</feature>
<feature type="peptide" id="PRO_0000434258" description="Short neuropeptide F" evidence="3">
    <location>
        <begin position="78"/>
        <end position="85"/>
    </location>
</feature>
<feature type="propeptide" id="PRO_0000434259" evidence="6">
    <location>
        <begin position="88"/>
        <end position="111"/>
    </location>
</feature>
<feature type="modified residue" description="Phenylalanine amide" evidence="3">
    <location>
        <position position="85"/>
    </location>
</feature>
<gene>
    <name evidence="7" type="ORF">EAG_11010</name>
</gene>
<dbReference type="EMBL" id="GL439967">
    <property type="protein sequence ID" value="EFN66516.1"/>
    <property type="molecule type" value="Genomic_DNA"/>
</dbReference>
<dbReference type="STRING" id="104421.E2AJ76"/>
<dbReference type="EnsemblMetazoa" id="XM_011260741.2">
    <property type="protein sequence ID" value="XP_011259043.1"/>
    <property type="gene ID" value="LOC105253009"/>
</dbReference>
<dbReference type="KEGG" id="cfo:105253009"/>
<dbReference type="OMA" id="NYMDYGE"/>
<dbReference type="OrthoDB" id="6364308at2759"/>
<dbReference type="Proteomes" id="UP000000311">
    <property type="component" value="Unassembled WGS sequence"/>
</dbReference>
<dbReference type="GO" id="GO:0005576">
    <property type="term" value="C:extracellular region"/>
    <property type="evidence" value="ECO:0007669"/>
    <property type="project" value="UniProtKB-SubCell"/>
</dbReference>
<dbReference type="GO" id="GO:0007218">
    <property type="term" value="P:neuropeptide signaling pathway"/>
    <property type="evidence" value="ECO:0007669"/>
    <property type="project" value="UniProtKB-KW"/>
</dbReference>
<sequence>MSAMYAKRCAALVLLVVTVGLVNATENYMDYGEEMAEKTPAENIHELYRLLLQRNTLDNAGFGGIPLEHLMIRKSQRSPSLRLRFGRSGPHVSARALPRPMGAVAGYDDNN</sequence>
<proteinExistence type="evidence at protein level"/>
<name>SNPF_CAMFO</name>
<accession>E2AJ76</accession>
<protein>
    <recommendedName>
        <fullName evidence="4">Short neuropeptide F</fullName>
        <shortName evidence="4">sNPF</shortName>
    </recommendedName>
</protein>
<evidence type="ECO:0000250" key="1">
    <source>
        <dbReference type="UniProtKB" id="Q9VIQ0"/>
    </source>
</evidence>
<evidence type="ECO:0000255" key="2"/>
<evidence type="ECO:0000269" key="3">
    <source>
    </source>
</evidence>
<evidence type="ECO:0000303" key="4">
    <source>
    </source>
</evidence>
<evidence type="ECO:0000305" key="5"/>
<evidence type="ECO:0000305" key="6">
    <source>
    </source>
</evidence>
<evidence type="ECO:0000312" key="7">
    <source>
        <dbReference type="EMBL" id="EFN66516.1"/>
    </source>
</evidence>
<organism>
    <name type="scientific">Camponotus floridanus</name>
    <name type="common">Florida carpenter ant</name>
    <dbReference type="NCBI Taxonomy" id="104421"/>
    <lineage>
        <taxon>Eukaryota</taxon>
        <taxon>Metazoa</taxon>
        <taxon>Ecdysozoa</taxon>
        <taxon>Arthropoda</taxon>
        <taxon>Hexapoda</taxon>
        <taxon>Insecta</taxon>
        <taxon>Pterygota</taxon>
        <taxon>Neoptera</taxon>
        <taxon>Endopterygota</taxon>
        <taxon>Hymenoptera</taxon>
        <taxon>Apocrita</taxon>
        <taxon>Aculeata</taxon>
        <taxon>Formicoidea</taxon>
        <taxon>Formicidae</taxon>
        <taxon>Formicinae</taxon>
        <taxon>Camponotus</taxon>
    </lineage>
</organism>
<reference key="1">
    <citation type="journal article" date="2010" name="Science">
        <title>Genomic comparison of the ants Camponotus floridanus and Harpegnathos saltator.</title>
        <authorList>
            <person name="Bonasio R."/>
            <person name="Zhang G."/>
            <person name="Ye C."/>
            <person name="Mutti N.S."/>
            <person name="Fang X."/>
            <person name="Qin N."/>
            <person name="Donahue G."/>
            <person name="Yang P."/>
            <person name="Li Q."/>
            <person name="Li C."/>
            <person name="Zhang P."/>
            <person name="Huang Z."/>
            <person name="Berger S.L."/>
            <person name="Reinberg D."/>
            <person name="Wang J."/>
            <person name="Liebig J."/>
        </authorList>
    </citation>
    <scope>NUCLEOTIDE SEQUENCE [LARGE SCALE GENOMIC DNA]</scope>
</reference>
<reference evidence="5" key="2">
    <citation type="journal article" date="2015" name="J. Proteome Res.">
        <title>Neuropeptidomics of the carpenter ant Camponotus floridanus.</title>
        <authorList>
            <person name="Schmitt F."/>
            <person name="Vanselow J.T."/>
            <person name="Schlosser A."/>
            <person name="Kahnt J."/>
            <person name="Roessler W."/>
            <person name="Wegener C."/>
        </authorList>
    </citation>
    <scope>PROTEIN SEQUENCE OF 78-85</scope>
    <scope>TISSUE SPECIFICITY</scope>
    <scope>MASS SPECTROMETRY</scope>
    <scope>IDENTIFICATION BY MASS SPECTROMETRY</scope>
    <scope>AMIDATION AT PHE-85</scope>
</reference>
<keyword id="KW-0027">Amidation</keyword>
<keyword id="KW-0903">Direct protein sequencing</keyword>
<keyword id="KW-0527">Neuropeptide</keyword>
<keyword id="KW-1185">Reference proteome</keyword>
<keyword id="KW-0964">Secreted</keyword>
<keyword id="KW-0732">Signal</keyword>